<name>TUT4_MOUSE</name>
<reference key="1">
    <citation type="journal article" date="2009" name="PLoS Biol.">
        <title>Lineage-specific biology revealed by a finished genome assembly of the mouse.</title>
        <authorList>
            <person name="Church D.M."/>
            <person name="Goodstadt L."/>
            <person name="Hillier L.W."/>
            <person name="Zody M.C."/>
            <person name="Goldstein S."/>
            <person name="She X."/>
            <person name="Bult C.J."/>
            <person name="Agarwala R."/>
            <person name="Cherry J.L."/>
            <person name="DiCuccio M."/>
            <person name="Hlavina W."/>
            <person name="Kapustin Y."/>
            <person name="Meric P."/>
            <person name="Maglott D."/>
            <person name="Birtle Z."/>
            <person name="Marques A.C."/>
            <person name="Graves T."/>
            <person name="Zhou S."/>
            <person name="Teague B."/>
            <person name="Potamousis K."/>
            <person name="Churas C."/>
            <person name="Place M."/>
            <person name="Herschleb J."/>
            <person name="Runnheim R."/>
            <person name="Forrest D."/>
            <person name="Amos-Landgraf J."/>
            <person name="Schwartz D.C."/>
            <person name="Cheng Z."/>
            <person name="Lindblad-Toh K."/>
            <person name="Eichler E.E."/>
            <person name="Ponting C.P."/>
        </authorList>
    </citation>
    <scope>NUCLEOTIDE SEQUENCE [LARGE SCALE GENOMIC DNA]</scope>
    <source>
        <strain>C57BL/6J</strain>
    </source>
</reference>
<reference key="2">
    <citation type="journal article" date="2004" name="Genome Res.">
        <title>The status, quality, and expansion of the NIH full-length cDNA project: the Mammalian Gene Collection (MGC).</title>
        <authorList>
            <consortium name="The MGC Project Team"/>
        </authorList>
    </citation>
    <scope>NUCLEOTIDE SEQUENCE [LARGE SCALE MRNA]</scope>
    <source>
        <tissue>Brain</tissue>
    </source>
</reference>
<reference key="3">
    <citation type="submission" date="2005-02" db="EMBL/GenBank/DDBJ databases">
        <title>Prediction of the coding sequences of mouse homologues of KIAA gene. The complete nucleotide sequences of mouse KIAA-homologous cDNAs identified by screening of terminal sequences of cDNA clones randomly sampled from size-fractionated libraries.</title>
        <authorList>
            <person name="Okazaki N."/>
            <person name="Kikuno R.F."/>
            <person name="Ohara R."/>
            <person name="Inamoto S."/>
            <person name="Nagase T."/>
            <person name="Ohara O."/>
            <person name="Koga H."/>
        </authorList>
    </citation>
    <scope>NUCLEOTIDE SEQUENCE [LARGE SCALE MRNA] OF 89-1644</scope>
    <source>
        <tissue>Brain</tissue>
    </source>
</reference>
<reference key="4">
    <citation type="journal article" date="2005" name="Science">
        <title>The transcriptional landscape of the mammalian genome.</title>
        <authorList>
            <person name="Carninci P."/>
            <person name="Kasukawa T."/>
            <person name="Katayama S."/>
            <person name="Gough J."/>
            <person name="Frith M.C."/>
            <person name="Maeda N."/>
            <person name="Oyama R."/>
            <person name="Ravasi T."/>
            <person name="Lenhard B."/>
            <person name="Wells C."/>
            <person name="Kodzius R."/>
            <person name="Shimokawa K."/>
            <person name="Bajic V.B."/>
            <person name="Brenner S.E."/>
            <person name="Batalov S."/>
            <person name="Forrest A.R."/>
            <person name="Zavolan M."/>
            <person name="Davis M.J."/>
            <person name="Wilming L.G."/>
            <person name="Aidinis V."/>
            <person name="Allen J.E."/>
            <person name="Ambesi-Impiombato A."/>
            <person name="Apweiler R."/>
            <person name="Aturaliya R.N."/>
            <person name="Bailey T.L."/>
            <person name="Bansal M."/>
            <person name="Baxter L."/>
            <person name="Beisel K.W."/>
            <person name="Bersano T."/>
            <person name="Bono H."/>
            <person name="Chalk A.M."/>
            <person name="Chiu K.P."/>
            <person name="Choudhary V."/>
            <person name="Christoffels A."/>
            <person name="Clutterbuck D.R."/>
            <person name="Crowe M.L."/>
            <person name="Dalla E."/>
            <person name="Dalrymple B.P."/>
            <person name="de Bono B."/>
            <person name="Della Gatta G."/>
            <person name="di Bernardo D."/>
            <person name="Down T."/>
            <person name="Engstrom P."/>
            <person name="Fagiolini M."/>
            <person name="Faulkner G."/>
            <person name="Fletcher C.F."/>
            <person name="Fukushima T."/>
            <person name="Furuno M."/>
            <person name="Futaki S."/>
            <person name="Gariboldi M."/>
            <person name="Georgii-Hemming P."/>
            <person name="Gingeras T.R."/>
            <person name="Gojobori T."/>
            <person name="Green R.E."/>
            <person name="Gustincich S."/>
            <person name="Harbers M."/>
            <person name="Hayashi Y."/>
            <person name="Hensch T.K."/>
            <person name="Hirokawa N."/>
            <person name="Hill D."/>
            <person name="Huminiecki L."/>
            <person name="Iacono M."/>
            <person name="Ikeo K."/>
            <person name="Iwama A."/>
            <person name="Ishikawa T."/>
            <person name="Jakt M."/>
            <person name="Kanapin A."/>
            <person name="Katoh M."/>
            <person name="Kawasawa Y."/>
            <person name="Kelso J."/>
            <person name="Kitamura H."/>
            <person name="Kitano H."/>
            <person name="Kollias G."/>
            <person name="Krishnan S.P."/>
            <person name="Kruger A."/>
            <person name="Kummerfeld S.K."/>
            <person name="Kurochkin I.V."/>
            <person name="Lareau L.F."/>
            <person name="Lazarevic D."/>
            <person name="Lipovich L."/>
            <person name="Liu J."/>
            <person name="Liuni S."/>
            <person name="McWilliam S."/>
            <person name="Madan Babu M."/>
            <person name="Madera M."/>
            <person name="Marchionni L."/>
            <person name="Matsuda H."/>
            <person name="Matsuzawa S."/>
            <person name="Miki H."/>
            <person name="Mignone F."/>
            <person name="Miyake S."/>
            <person name="Morris K."/>
            <person name="Mottagui-Tabar S."/>
            <person name="Mulder N."/>
            <person name="Nakano N."/>
            <person name="Nakauchi H."/>
            <person name="Ng P."/>
            <person name="Nilsson R."/>
            <person name="Nishiguchi S."/>
            <person name="Nishikawa S."/>
            <person name="Nori F."/>
            <person name="Ohara O."/>
            <person name="Okazaki Y."/>
            <person name="Orlando V."/>
            <person name="Pang K.C."/>
            <person name="Pavan W.J."/>
            <person name="Pavesi G."/>
            <person name="Pesole G."/>
            <person name="Petrovsky N."/>
            <person name="Piazza S."/>
            <person name="Reed J."/>
            <person name="Reid J.F."/>
            <person name="Ring B.Z."/>
            <person name="Ringwald M."/>
            <person name="Rost B."/>
            <person name="Ruan Y."/>
            <person name="Salzberg S.L."/>
            <person name="Sandelin A."/>
            <person name="Schneider C."/>
            <person name="Schoenbach C."/>
            <person name="Sekiguchi K."/>
            <person name="Semple C.A."/>
            <person name="Seno S."/>
            <person name="Sessa L."/>
            <person name="Sheng Y."/>
            <person name="Shibata Y."/>
            <person name="Shimada H."/>
            <person name="Shimada K."/>
            <person name="Silva D."/>
            <person name="Sinclair B."/>
            <person name="Sperling S."/>
            <person name="Stupka E."/>
            <person name="Sugiura K."/>
            <person name="Sultana R."/>
            <person name="Takenaka Y."/>
            <person name="Taki K."/>
            <person name="Tammoja K."/>
            <person name="Tan S.L."/>
            <person name="Tang S."/>
            <person name="Taylor M.S."/>
            <person name="Tegner J."/>
            <person name="Teichmann S.A."/>
            <person name="Ueda H.R."/>
            <person name="van Nimwegen E."/>
            <person name="Verardo R."/>
            <person name="Wei C.L."/>
            <person name="Yagi K."/>
            <person name="Yamanishi H."/>
            <person name="Zabarovsky E."/>
            <person name="Zhu S."/>
            <person name="Zimmer A."/>
            <person name="Hide W."/>
            <person name="Bult C."/>
            <person name="Grimmond S.M."/>
            <person name="Teasdale R.D."/>
            <person name="Liu E.T."/>
            <person name="Brusic V."/>
            <person name="Quackenbush J."/>
            <person name="Wahlestedt C."/>
            <person name="Mattick J.S."/>
            <person name="Hume D.A."/>
            <person name="Kai C."/>
            <person name="Sasaki D."/>
            <person name="Tomaru Y."/>
            <person name="Fukuda S."/>
            <person name="Kanamori-Katayama M."/>
            <person name="Suzuki M."/>
            <person name="Aoki J."/>
            <person name="Arakawa T."/>
            <person name="Iida J."/>
            <person name="Imamura K."/>
            <person name="Itoh M."/>
            <person name="Kato T."/>
            <person name="Kawaji H."/>
            <person name="Kawagashira N."/>
            <person name="Kawashima T."/>
            <person name="Kojima M."/>
            <person name="Kondo S."/>
            <person name="Konno H."/>
            <person name="Nakano K."/>
            <person name="Ninomiya N."/>
            <person name="Nishio T."/>
            <person name="Okada M."/>
            <person name="Plessy C."/>
            <person name="Shibata K."/>
            <person name="Shiraki T."/>
            <person name="Suzuki S."/>
            <person name="Tagami M."/>
            <person name="Waki K."/>
            <person name="Watahiki A."/>
            <person name="Okamura-Oho Y."/>
            <person name="Suzuki H."/>
            <person name="Kawai J."/>
            <person name="Hayashizaki Y."/>
        </authorList>
    </citation>
    <scope>NUCLEOTIDE SEQUENCE [LARGE SCALE MRNA] OF 753-1644</scope>
    <source>
        <strain>C57BL/6J</strain>
        <tissue>Testis</tissue>
    </source>
</reference>
<reference key="5">
    <citation type="journal article" date="2009" name="Cell">
        <title>TUT4 in concert with Lin28 suppresses MicroRNA biogenesis through pre-microRNA uridylation.</title>
        <authorList>
            <person name="Heo I."/>
            <person name="Joo C."/>
            <person name="Kim Y.-K."/>
            <person name="Ha M."/>
            <person name="Yoon M.-J."/>
            <person name="Cho J."/>
            <person name="Yeom K.-H."/>
            <person name="Han J."/>
            <person name="Kim V.N."/>
        </authorList>
    </citation>
    <scope>FUNCTION IN PRE-LET-7 URIDYLATION AND MAINTENANCE OF EMBRYONIC STEM CELL PLURIPOTENCY</scope>
    <scope>SUBCELLULAR LOCATION</scope>
</reference>
<reference key="6">
    <citation type="journal article" date="2009" name="Immunity">
        <title>The phagosomal proteome in interferon-gamma-activated macrophages.</title>
        <authorList>
            <person name="Trost M."/>
            <person name="English L."/>
            <person name="Lemieux S."/>
            <person name="Courcelles M."/>
            <person name="Desjardins M."/>
            <person name="Thibault P."/>
        </authorList>
    </citation>
    <scope>PHOSPHORYLATION [LARGE SCALE ANALYSIS] AT SER-131</scope>
    <scope>IDENTIFICATION BY MASS SPECTROMETRY [LARGE SCALE ANALYSIS]</scope>
</reference>
<reference key="7">
    <citation type="journal article" date="2009" name="Nat. Cell Biol.">
        <title>Zcchc11-dependent uridylation of microRNA directs cytokine expression.</title>
        <authorList>
            <person name="Jones M.R."/>
            <person name="Quinton L.J."/>
            <person name="Blahna M.T."/>
            <person name="Neilson J.R."/>
            <person name="Fu S."/>
            <person name="Ivanov A.R."/>
            <person name="Wolf D.A."/>
            <person name="Mizgerd J.P."/>
        </authorList>
    </citation>
    <scope>FUNCTION</scope>
    <scope>CATALYTIC ACTIVITY</scope>
    <scope>TISSUE SPECIFICITY</scope>
    <scope>MUTAGENESIS OF ASP-1026 AND ASP-1028</scope>
</reference>
<reference key="8">
    <citation type="journal article" date="2010" name="Cell">
        <title>A tissue-specific atlas of mouse protein phosphorylation and expression.</title>
        <authorList>
            <person name="Huttlin E.L."/>
            <person name="Jedrychowski M.P."/>
            <person name="Elias J.E."/>
            <person name="Goswami T."/>
            <person name="Rad R."/>
            <person name="Beausoleil S.A."/>
            <person name="Villen J."/>
            <person name="Haas W."/>
            <person name="Sowa M.E."/>
            <person name="Gygi S.P."/>
        </authorList>
    </citation>
    <scope>PHOSPHORYLATION [LARGE SCALE ANALYSIS] AT SER-176</scope>
    <scope>IDENTIFICATION BY MASS SPECTROMETRY [LARGE SCALE ANALYSIS]</scope>
    <source>
        <tissue>Lung</tissue>
        <tissue>Spleen</tissue>
        <tissue>Testis</tissue>
    </source>
</reference>
<reference key="9">
    <citation type="journal article" date="2012" name="RNA">
        <title>Lin28-mediated control of let-7 microRNA expression by alternative TUTases Zcchc11 (TUT4) and Zcchc6 (TUT7).</title>
        <authorList>
            <person name="Thornton J.E."/>
            <person name="Chang H.M."/>
            <person name="Piskounova E."/>
            <person name="Gregory R.I."/>
        </authorList>
    </citation>
    <scope>FUNCTION IN PRE-LET-7 URIDYLATION</scope>
    <scope>MUTAGENESIS OF CYS-326 AND CYS-329</scope>
</reference>
<reference key="10">
    <citation type="journal article" date="2014" name="Mol. Cell. Proteomics">
        <title>Immunoaffinity enrichment and mass spectrometry analysis of protein methylation.</title>
        <authorList>
            <person name="Guo A."/>
            <person name="Gu H."/>
            <person name="Zhou J."/>
            <person name="Mulhern D."/>
            <person name="Wang Y."/>
            <person name="Lee K.A."/>
            <person name="Yang V."/>
            <person name="Aguiar M."/>
            <person name="Kornhauser J."/>
            <person name="Jia X."/>
            <person name="Ren J."/>
            <person name="Beausoleil S.A."/>
            <person name="Silva J.C."/>
            <person name="Vemulapalli V."/>
            <person name="Bedford M.T."/>
            <person name="Comb M.J."/>
        </authorList>
    </citation>
    <scope>METHYLATION [LARGE SCALE ANALYSIS] AT ARG-1624</scope>
    <scope>IDENTIFICATION BY MASS SPECTROMETRY [LARGE SCALE ANALYSIS]</scope>
    <source>
        <tissue>Embryo</tissue>
    </source>
</reference>
<reference key="11">
    <citation type="journal article" date="2017" name="Nature">
        <title>mRNA 3' uridylation and poly(A) tail length sculpt the mammalian maternal transcriptome.</title>
        <authorList>
            <person name="Morgan M."/>
            <person name="Much C."/>
            <person name="DiGiacomo M."/>
            <person name="Azzi C."/>
            <person name="Ivanova I."/>
            <person name="Vitsios D.M."/>
            <person name="Pistolic J."/>
            <person name="Collier P."/>
            <person name="Moreira P.N."/>
            <person name="Benes V."/>
            <person name="Enright A.J."/>
            <person name="O'Carroll D."/>
        </authorList>
    </citation>
    <scope>FUNCTION</scope>
    <scope>DISRUPTION PHENOTYPE</scope>
    <scope>MUTAGENESIS OF ASP-1026 AND ASP-1028</scope>
</reference>
<reference key="12">
    <citation type="journal article" date="2017" name="Nat. Struct. Mol. Biol.">
        <title>Multi-domain utilization by TUT4 and TUT7 in control of let-7 biogenesis.</title>
        <authorList>
            <person name="Faehnle C.R."/>
            <person name="Walleshauser J."/>
            <person name="Joshua-Tor L."/>
        </authorList>
    </citation>
    <scope>FUNCTION</scope>
    <scope>DOMAIN</scope>
    <scope>INTERACTION WITH LIN28A</scope>
    <scope>RNA-BINDING</scope>
</reference>
<feature type="chain" id="PRO_0000385330" description="Terminal uridylyltransferase 4">
    <location>
        <begin position="1"/>
        <end position="1644"/>
    </location>
</feature>
<feature type="domain" description="PAP-associated 1">
    <location>
        <begin position="649"/>
        <end position="698"/>
    </location>
</feature>
<feature type="domain" description="PAP-associated 2">
    <location>
        <begin position="1201"/>
        <end position="1254"/>
    </location>
</feature>
<feature type="zinc finger region" description="CCHC-type 1" evidence="4">
    <location>
        <begin position="930"/>
        <end position="947"/>
    </location>
</feature>
<feature type="zinc finger region" description="CCHC-type 2" evidence="4">
    <location>
        <begin position="1310"/>
        <end position="1327"/>
    </location>
</feature>
<feature type="zinc finger region" description="CCHC-type 3" evidence="4">
    <location>
        <begin position="1358"/>
        <end position="1375"/>
    </location>
</feature>
<feature type="region of interest" description="Disordered" evidence="5">
    <location>
        <begin position="30"/>
        <end position="60"/>
    </location>
</feature>
<feature type="region of interest" description="Disordered" evidence="5">
    <location>
        <begin position="75"/>
        <end position="277"/>
    </location>
</feature>
<feature type="region of interest" description="Required for interaction with LIN28A and pre-let-7 RNA" evidence="2">
    <location>
        <begin position="273"/>
        <end position="353"/>
    </location>
</feature>
<feature type="region of interest" description="Disordered" evidence="5">
    <location>
        <begin position="603"/>
        <end position="640"/>
    </location>
</feature>
<feature type="region of interest" description="Disordered" evidence="5">
    <location>
        <begin position="733"/>
        <end position="759"/>
    </location>
</feature>
<feature type="region of interest" description="Disordered" evidence="5">
    <location>
        <begin position="812"/>
        <end position="841"/>
    </location>
</feature>
<feature type="region of interest" description="Sufficient for monouridylation activity" evidence="3">
    <location>
        <begin position="918"/>
        <end position="1634"/>
    </location>
</feature>
<feature type="region of interest" description="Disordered" evidence="5">
    <location>
        <begin position="1329"/>
        <end position="1350"/>
    </location>
</feature>
<feature type="region of interest" description="Disordered" evidence="5">
    <location>
        <begin position="1402"/>
        <end position="1483"/>
    </location>
</feature>
<feature type="compositionally biased region" description="Polar residues" evidence="5">
    <location>
        <begin position="108"/>
        <end position="123"/>
    </location>
</feature>
<feature type="compositionally biased region" description="Polar residues" evidence="5">
    <location>
        <begin position="146"/>
        <end position="156"/>
    </location>
</feature>
<feature type="compositionally biased region" description="Polar residues" evidence="5">
    <location>
        <begin position="163"/>
        <end position="174"/>
    </location>
</feature>
<feature type="compositionally biased region" description="Polar residues" evidence="5">
    <location>
        <begin position="194"/>
        <end position="209"/>
    </location>
</feature>
<feature type="compositionally biased region" description="Polar residues" evidence="5">
    <location>
        <begin position="226"/>
        <end position="242"/>
    </location>
</feature>
<feature type="compositionally biased region" description="Basic and acidic residues" evidence="5">
    <location>
        <begin position="258"/>
        <end position="272"/>
    </location>
</feature>
<feature type="compositionally biased region" description="Basic and acidic residues" evidence="5">
    <location>
        <begin position="603"/>
        <end position="623"/>
    </location>
</feature>
<feature type="compositionally biased region" description="Basic residues" evidence="5">
    <location>
        <begin position="745"/>
        <end position="755"/>
    </location>
</feature>
<feature type="compositionally biased region" description="Low complexity" evidence="5">
    <location>
        <begin position="815"/>
        <end position="827"/>
    </location>
</feature>
<feature type="compositionally biased region" description="Basic and acidic residues" evidence="5">
    <location>
        <begin position="828"/>
        <end position="837"/>
    </location>
</feature>
<feature type="compositionally biased region" description="Low complexity" evidence="5">
    <location>
        <begin position="1402"/>
        <end position="1427"/>
    </location>
</feature>
<feature type="compositionally biased region" description="Pro residues" evidence="5">
    <location>
        <begin position="1428"/>
        <end position="1450"/>
    </location>
</feature>
<feature type="compositionally biased region" description="Low complexity" evidence="5">
    <location>
        <begin position="1451"/>
        <end position="1473"/>
    </location>
</feature>
<feature type="binding site" evidence="2">
    <location>
        <position position="326"/>
    </location>
    <ligand>
        <name>Zn(2+)</name>
        <dbReference type="ChEBI" id="CHEBI:29105"/>
        <label>1</label>
    </ligand>
</feature>
<feature type="binding site" evidence="2">
    <location>
        <position position="329"/>
    </location>
    <ligand>
        <name>Zn(2+)</name>
        <dbReference type="ChEBI" id="CHEBI:29105"/>
        <label>1</label>
    </ligand>
</feature>
<feature type="binding site" evidence="2">
    <location>
        <position position="342"/>
    </location>
    <ligand>
        <name>Zn(2+)</name>
        <dbReference type="ChEBI" id="CHEBI:29105"/>
        <label>1</label>
    </ligand>
</feature>
<feature type="binding site" evidence="2">
    <location>
        <position position="348"/>
    </location>
    <ligand>
        <name>Zn(2+)</name>
        <dbReference type="ChEBI" id="CHEBI:29105"/>
        <label>1</label>
    </ligand>
</feature>
<feature type="binding site" evidence="3">
    <location>
        <begin position="1015"/>
        <end position="1018"/>
    </location>
    <ligand>
        <name>UTP</name>
        <dbReference type="ChEBI" id="CHEBI:46398"/>
    </ligand>
</feature>
<feature type="binding site" evidence="3">
    <location>
        <begin position="1025"/>
        <end position="1028"/>
    </location>
    <ligand>
        <name>UTP</name>
        <dbReference type="ChEBI" id="CHEBI:46398"/>
    </ligand>
</feature>
<feature type="binding site" evidence="1">
    <location>
        <position position="1026"/>
    </location>
    <ligand>
        <name>Mg(2+)</name>
        <dbReference type="ChEBI" id="CHEBI:18420"/>
        <note>catalytic</note>
    </ligand>
</feature>
<feature type="binding site" evidence="1">
    <location>
        <position position="1028"/>
    </location>
    <ligand>
        <name>Mg(2+)</name>
        <dbReference type="ChEBI" id="CHEBI:18420"/>
        <note>catalytic</note>
    </ligand>
</feature>
<feature type="binding site" evidence="3">
    <location>
        <position position="1098"/>
    </location>
    <ligand>
        <name>UTP</name>
        <dbReference type="ChEBI" id="CHEBI:46398"/>
    </ligand>
</feature>
<feature type="binding site" evidence="3">
    <location>
        <position position="1120"/>
    </location>
    <ligand>
        <name>UTP</name>
        <dbReference type="ChEBI" id="CHEBI:46398"/>
    </ligand>
</feature>
<feature type="binding site" evidence="3">
    <location>
        <begin position="1138"/>
        <end position="1142"/>
    </location>
    <ligand>
        <name>UTP</name>
        <dbReference type="ChEBI" id="CHEBI:46398"/>
    </ligand>
</feature>
<feature type="binding site" evidence="3">
    <location>
        <position position="1254"/>
    </location>
    <ligand>
        <name>UTP</name>
        <dbReference type="ChEBI" id="CHEBI:46398"/>
    </ligand>
</feature>
<feature type="modified residue" description="Phosphoserine" evidence="2">
    <location>
        <position position="102"/>
    </location>
</feature>
<feature type="modified residue" description="Phosphoserine" evidence="13">
    <location>
        <position position="131"/>
    </location>
</feature>
<feature type="modified residue" description="Phosphoserine" evidence="14">
    <location>
        <position position="176"/>
    </location>
</feature>
<feature type="modified residue" description="Omega-N-methylarginine" evidence="15">
    <location>
        <position position="1624"/>
    </location>
</feature>
<feature type="mutagenesis site" description="No effect on basal uridylation activity, but loss of LIN28A-enhanced uridylation; when associated with A-329." evidence="8">
    <original>C</original>
    <variation>A</variation>
    <location>
        <position position="326"/>
    </location>
</feature>
<feature type="mutagenesis site" description="No effect on basal uridylation activity, but loss of LIN28A-enhanced uridylation; when associated with A-326." evidence="8">
    <original>C</original>
    <variation>A</variation>
    <location>
        <position position="329"/>
    </location>
</feature>
<feature type="mutagenesis site" description="Loss of nucleotidyltransferase activity and oocytes are unable to support early embryonic development; when associated with A-1028." evidence="6 10">
    <original>D</original>
    <variation>A</variation>
    <location>
        <position position="1026"/>
    </location>
</feature>
<feature type="mutagenesis site" description="Loss of nucleotidyltransferase activity and oocytes are unable to support early embryonic development; when associated with A-1026." evidence="6 10">
    <original>D</original>
    <variation>A</variation>
    <location>
        <position position="1028"/>
    </location>
</feature>
<feature type="sequence conflict" description="In Ref. 2; AAI50792 and 3; BAD90397." evidence="11" ref="2 3">
    <original>D</original>
    <variation>A</variation>
    <location>
        <position position="815"/>
    </location>
</feature>
<feature type="sequence conflict" description="In Ref. 4; BAE22125." evidence="11" ref="4">
    <original>S</original>
    <variation>R</variation>
    <location>
        <position position="1336"/>
    </location>
</feature>
<feature type="sequence conflict" description="In Ref. 4; BAE22125." evidence="11" ref="4">
    <original>S</original>
    <variation>C</variation>
    <location>
        <position position="1422"/>
    </location>
</feature>
<organism>
    <name type="scientific">Mus musculus</name>
    <name type="common">Mouse</name>
    <dbReference type="NCBI Taxonomy" id="10090"/>
    <lineage>
        <taxon>Eukaryota</taxon>
        <taxon>Metazoa</taxon>
        <taxon>Chordata</taxon>
        <taxon>Craniata</taxon>
        <taxon>Vertebrata</taxon>
        <taxon>Euteleostomi</taxon>
        <taxon>Mammalia</taxon>
        <taxon>Eutheria</taxon>
        <taxon>Euarchontoglires</taxon>
        <taxon>Glires</taxon>
        <taxon>Rodentia</taxon>
        <taxon>Myomorpha</taxon>
        <taxon>Muroidea</taxon>
        <taxon>Muridae</taxon>
        <taxon>Murinae</taxon>
        <taxon>Mus</taxon>
        <taxon>Mus</taxon>
    </lineage>
</organism>
<proteinExistence type="evidence at protein level"/>
<evidence type="ECO:0000250" key="1"/>
<evidence type="ECO:0000250" key="2">
    <source>
        <dbReference type="UniProtKB" id="Q5TAX3"/>
    </source>
</evidence>
<evidence type="ECO:0000250" key="3">
    <source>
        <dbReference type="UniProtKB" id="Q5VYS8"/>
    </source>
</evidence>
<evidence type="ECO:0000255" key="4">
    <source>
        <dbReference type="PROSITE-ProRule" id="PRU00047"/>
    </source>
</evidence>
<evidence type="ECO:0000256" key="5">
    <source>
        <dbReference type="SAM" id="MobiDB-lite"/>
    </source>
</evidence>
<evidence type="ECO:0000269" key="6">
    <source>
    </source>
</evidence>
<evidence type="ECO:0000269" key="7">
    <source>
    </source>
</evidence>
<evidence type="ECO:0000269" key="8">
    <source>
    </source>
</evidence>
<evidence type="ECO:0000269" key="9">
    <source>
    </source>
</evidence>
<evidence type="ECO:0000269" key="10">
    <source>
    </source>
</evidence>
<evidence type="ECO:0000305" key="11"/>
<evidence type="ECO:0000312" key="12">
    <source>
        <dbReference type="MGI" id="MGI:2445126"/>
    </source>
</evidence>
<evidence type="ECO:0007744" key="13">
    <source>
    </source>
</evidence>
<evidence type="ECO:0007744" key="14">
    <source>
    </source>
</evidence>
<evidence type="ECO:0007744" key="15">
    <source>
    </source>
</evidence>
<protein>
    <recommendedName>
        <fullName evidence="11">Terminal uridylyltransferase 4</fullName>
        <shortName>TUTase 4</shortName>
        <ecNumber evidence="6">2.7.7.52</ecNumber>
    </recommendedName>
    <alternativeName>
        <fullName>Zinc finger CCHC domain-containing protein 11</fullName>
    </alternativeName>
</protein>
<keyword id="KW-0963">Cytoplasm</keyword>
<keyword id="KW-0460">Magnesium</keyword>
<keyword id="KW-0464">Manganese</keyword>
<keyword id="KW-0479">Metal-binding</keyword>
<keyword id="KW-0488">Methylation</keyword>
<keyword id="KW-0548">Nucleotidyltransferase</keyword>
<keyword id="KW-0539">Nucleus</keyword>
<keyword id="KW-0597">Phosphoprotein</keyword>
<keyword id="KW-1185">Reference proteome</keyword>
<keyword id="KW-0677">Repeat</keyword>
<keyword id="KW-0943">RNA-mediated gene silencing</keyword>
<keyword id="KW-0808">Transferase</keyword>
<keyword id="KW-0862">Zinc</keyword>
<keyword id="KW-0863">Zinc-finger</keyword>
<dbReference type="EC" id="2.7.7.52" evidence="6"/>
<dbReference type="EMBL" id="AL626783">
    <property type="protein sequence ID" value="CAM23506.1"/>
    <property type="status" value="ALT_SEQ"/>
    <property type="molecule type" value="Genomic_DNA"/>
</dbReference>
<dbReference type="EMBL" id="AL627238">
    <property type="protein sequence ID" value="CAM23506.1"/>
    <property type="status" value="JOINED"/>
    <property type="molecule type" value="Genomic_DNA"/>
</dbReference>
<dbReference type="EMBL" id="AL627238">
    <property type="protein sequence ID" value="CAM25329.1"/>
    <property type="status" value="ALT_SEQ"/>
    <property type="molecule type" value="Genomic_DNA"/>
</dbReference>
<dbReference type="EMBL" id="AL626783">
    <property type="protein sequence ID" value="CAM25329.1"/>
    <property type="status" value="JOINED"/>
    <property type="molecule type" value="Genomic_DNA"/>
</dbReference>
<dbReference type="EMBL" id="BC150791">
    <property type="protein sequence ID" value="AAI50792.1"/>
    <property type="molecule type" value="mRNA"/>
</dbReference>
<dbReference type="EMBL" id="AK220327">
    <property type="protein sequence ID" value="BAD90397.1"/>
    <property type="molecule type" value="mRNA"/>
</dbReference>
<dbReference type="EMBL" id="AK134388">
    <property type="protein sequence ID" value="BAE22125.1"/>
    <property type="molecule type" value="mRNA"/>
</dbReference>
<dbReference type="CCDS" id="CCDS18451.1"/>
<dbReference type="RefSeq" id="NP_780681.2">
    <property type="nucleotide sequence ID" value="NM_175472.4"/>
</dbReference>
<dbReference type="RefSeq" id="XP_030109297.1">
    <property type="nucleotide sequence ID" value="XM_030253437.2"/>
</dbReference>
<dbReference type="SMR" id="B2RX14"/>
<dbReference type="BioGRID" id="230978">
    <property type="interactions" value="10"/>
</dbReference>
<dbReference type="DIP" id="DIP-48571N"/>
<dbReference type="FunCoup" id="B2RX14">
    <property type="interactions" value="3924"/>
</dbReference>
<dbReference type="IntAct" id="B2RX14">
    <property type="interactions" value="1"/>
</dbReference>
<dbReference type="STRING" id="10090.ENSMUSP00000044836"/>
<dbReference type="GlyGen" id="B2RX14">
    <property type="glycosylation" value="2 sites, 1 N-linked glycan (1 site)"/>
</dbReference>
<dbReference type="iPTMnet" id="B2RX14"/>
<dbReference type="PhosphoSitePlus" id="B2RX14"/>
<dbReference type="SwissPalm" id="B2RX14"/>
<dbReference type="jPOST" id="B2RX14"/>
<dbReference type="PaxDb" id="10090-ENSMUSP00000095538"/>
<dbReference type="ProteomicsDB" id="298386"/>
<dbReference type="Pumba" id="B2RX14"/>
<dbReference type="Antibodypedia" id="19117">
    <property type="antibodies" value="205 antibodies from 31 providers"/>
</dbReference>
<dbReference type="Ensembl" id="ENSMUST00000043368.12">
    <property type="protein sequence ID" value="ENSMUSP00000044836.6"/>
    <property type="gene ID" value="ENSMUSG00000034610.15"/>
</dbReference>
<dbReference type="GeneID" id="230594"/>
<dbReference type="KEGG" id="mmu:230594"/>
<dbReference type="UCSC" id="uc008ubd.1">
    <property type="organism name" value="mouse"/>
</dbReference>
<dbReference type="AGR" id="MGI:2445126"/>
<dbReference type="CTD" id="23318"/>
<dbReference type="MGI" id="MGI:2445126">
    <property type="gene designation" value="Tut4"/>
</dbReference>
<dbReference type="VEuPathDB" id="HostDB:ENSMUSG00000034610"/>
<dbReference type="eggNOG" id="KOG2277">
    <property type="taxonomic scope" value="Eukaryota"/>
</dbReference>
<dbReference type="GeneTree" id="ENSGT00940000156988"/>
<dbReference type="HOGENOM" id="CLU_003287_0_0_1"/>
<dbReference type="InParanoid" id="B2RX14"/>
<dbReference type="OMA" id="HCKAKKL"/>
<dbReference type="OrthoDB" id="419694at2759"/>
<dbReference type="BioGRID-ORCS" id="230594">
    <property type="hits" value="5 hits in 75 CRISPR screens"/>
</dbReference>
<dbReference type="ChiTaRS" id="Zcchc11">
    <property type="organism name" value="mouse"/>
</dbReference>
<dbReference type="PRO" id="PR:B2RX14"/>
<dbReference type="Proteomes" id="UP000000589">
    <property type="component" value="Chromosome 4"/>
</dbReference>
<dbReference type="RNAct" id="B2RX14">
    <property type="molecule type" value="protein"/>
</dbReference>
<dbReference type="Bgee" id="ENSMUSG00000034610">
    <property type="expression patterns" value="Expressed in manus and 233 other cell types or tissues"/>
</dbReference>
<dbReference type="ExpressionAtlas" id="B2RX14">
    <property type="expression patterns" value="baseline and differential"/>
</dbReference>
<dbReference type="GO" id="GO:0005737">
    <property type="term" value="C:cytoplasm"/>
    <property type="evidence" value="ECO:0000314"/>
    <property type="project" value="MGI"/>
</dbReference>
<dbReference type="GO" id="GO:0036464">
    <property type="term" value="C:cytoplasmic ribonucleoprotein granule"/>
    <property type="evidence" value="ECO:0000250"/>
    <property type="project" value="UniProtKB"/>
</dbReference>
<dbReference type="GO" id="GO:0005829">
    <property type="term" value="C:cytosol"/>
    <property type="evidence" value="ECO:0000304"/>
    <property type="project" value="Reactome"/>
</dbReference>
<dbReference type="GO" id="GO:0005634">
    <property type="term" value="C:nucleus"/>
    <property type="evidence" value="ECO:0000314"/>
    <property type="project" value="MGI"/>
</dbReference>
<dbReference type="GO" id="GO:0035198">
    <property type="term" value="F:miRNA binding"/>
    <property type="evidence" value="ECO:0000314"/>
    <property type="project" value="UniProtKB"/>
</dbReference>
<dbReference type="GO" id="GO:0050265">
    <property type="term" value="F:RNA uridylyltransferase activity"/>
    <property type="evidence" value="ECO:0000314"/>
    <property type="project" value="UniProtKB"/>
</dbReference>
<dbReference type="GO" id="GO:0070569">
    <property type="term" value="F:uridylyltransferase activity"/>
    <property type="evidence" value="ECO:0000314"/>
    <property type="project" value="UniProtKB"/>
</dbReference>
<dbReference type="GO" id="GO:0008270">
    <property type="term" value="F:zinc ion binding"/>
    <property type="evidence" value="ECO:0007669"/>
    <property type="project" value="UniProtKB-KW"/>
</dbReference>
<dbReference type="GO" id="GO:0070102">
    <property type="term" value="P:interleukin-6-mediated signaling pathway"/>
    <property type="evidence" value="ECO:0000315"/>
    <property type="project" value="UniProtKB"/>
</dbReference>
<dbReference type="GO" id="GO:0010587">
    <property type="term" value="P:miRNA catabolic process"/>
    <property type="evidence" value="ECO:0000250"/>
    <property type="project" value="UniProtKB"/>
</dbReference>
<dbReference type="GO" id="GO:0010586">
    <property type="term" value="P:miRNA metabolic process"/>
    <property type="evidence" value="ECO:0000314"/>
    <property type="project" value="UniProtKB"/>
</dbReference>
<dbReference type="GO" id="GO:0001556">
    <property type="term" value="P:oocyte maturation"/>
    <property type="evidence" value="ECO:0000315"/>
    <property type="project" value="UniProtKB"/>
</dbReference>
<dbReference type="GO" id="GO:1990074">
    <property type="term" value="P:polyuridylation-dependent mRNA catabolic process"/>
    <property type="evidence" value="ECO:0000315"/>
    <property type="project" value="UniProtKB"/>
</dbReference>
<dbReference type="GO" id="GO:0032755">
    <property type="term" value="P:positive regulation of interleukin-6 production"/>
    <property type="evidence" value="ECO:0000315"/>
    <property type="project" value="UniProtKB"/>
</dbReference>
<dbReference type="GO" id="GO:0031054">
    <property type="term" value="P:pre-miRNA processing"/>
    <property type="evidence" value="ECO:0000250"/>
    <property type="project" value="UniProtKB"/>
</dbReference>
<dbReference type="GO" id="GO:0031664">
    <property type="term" value="P:regulation of lipopolysaccharide-mediated signaling pathway"/>
    <property type="evidence" value="ECO:0000314"/>
    <property type="project" value="MGI"/>
</dbReference>
<dbReference type="GO" id="GO:0031123">
    <property type="term" value="P:RNA 3'-end processing"/>
    <property type="evidence" value="ECO:0000314"/>
    <property type="project" value="UniProtKB"/>
</dbReference>
<dbReference type="GO" id="GO:0019827">
    <property type="term" value="P:stem cell population maintenance"/>
    <property type="evidence" value="ECO:0000250"/>
    <property type="project" value="UniProtKB"/>
</dbReference>
<dbReference type="GO" id="GO:0141008">
    <property type="term" value="P:transposable element silencing by mRNA destabilization"/>
    <property type="evidence" value="ECO:0000250"/>
    <property type="project" value="UniProtKB"/>
</dbReference>
<dbReference type="CDD" id="cd05402">
    <property type="entry name" value="NT_PAP_TUTase"/>
    <property type="match status" value="2"/>
</dbReference>
<dbReference type="FunFam" id="1.10.1410.10:FF:000002">
    <property type="entry name" value="terminal uridylyltransferase 4 isoform X1"/>
    <property type="match status" value="1"/>
</dbReference>
<dbReference type="FunFam" id="3.30.460.10:FF:000005">
    <property type="entry name" value="terminal uridylyltransferase 4 isoform X1"/>
    <property type="match status" value="1"/>
</dbReference>
<dbReference type="FunFam" id="3.30.460.10:FF:000013">
    <property type="entry name" value="terminal uridylyltransferase 4 isoform X1"/>
    <property type="match status" value="1"/>
</dbReference>
<dbReference type="FunFam" id="1.10.1410.10:FF:000004">
    <property type="entry name" value="terminal uridylyltransferase 4 isoform X2"/>
    <property type="match status" value="1"/>
</dbReference>
<dbReference type="Gene3D" id="1.10.1410.10">
    <property type="match status" value="2"/>
</dbReference>
<dbReference type="Gene3D" id="3.30.460.10">
    <property type="entry name" value="Beta Polymerase, domain 2"/>
    <property type="match status" value="2"/>
</dbReference>
<dbReference type="Gene3D" id="4.10.60.10">
    <property type="entry name" value="Zinc finger, CCHC-type"/>
    <property type="match status" value="1"/>
</dbReference>
<dbReference type="InterPro" id="IPR054708">
    <property type="entry name" value="MTPAP-like_central"/>
</dbReference>
<dbReference type="InterPro" id="IPR043519">
    <property type="entry name" value="NT_sf"/>
</dbReference>
<dbReference type="InterPro" id="IPR002058">
    <property type="entry name" value="PAP_assoc"/>
</dbReference>
<dbReference type="InterPro" id="IPR045100">
    <property type="entry name" value="TUT4/7_NTP_transf"/>
</dbReference>
<dbReference type="InterPro" id="IPR001878">
    <property type="entry name" value="Znf_CCHC"/>
</dbReference>
<dbReference type="InterPro" id="IPR036875">
    <property type="entry name" value="Znf_CCHC_sf"/>
</dbReference>
<dbReference type="PANTHER" id="PTHR12271">
    <property type="entry name" value="POLY A POLYMERASE CID PAP -RELATED"/>
    <property type="match status" value="1"/>
</dbReference>
<dbReference type="PANTHER" id="PTHR12271:SF49">
    <property type="entry name" value="TERMINAL URIDYLYLTRANSFERASE 4"/>
    <property type="match status" value="1"/>
</dbReference>
<dbReference type="Pfam" id="PF22600">
    <property type="entry name" value="MTPAP-like_central"/>
    <property type="match status" value="1"/>
</dbReference>
<dbReference type="Pfam" id="PF03828">
    <property type="entry name" value="PAP_assoc"/>
    <property type="match status" value="2"/>
</dbReference>
<dbReference type="Pfam" id="PF19088">
    <property type="entry name" value="TUTase"/>
    <property type="match status" value="1"/>
</dbReference>
<dbReference type="Pfam" id="PF00098">
    <property type="entry name" value="zf-CCHC"/>
    <property type="match status" value="2"/>
</dbReference>
<dbReference type="SMART" id="SM00343">
    <property type="entry name" value="ZnF_C2HC"/>
    <property type="match status" value="3"/>
</dbReference>
<dbReference type="SUPFAM" id="SSF81301">
    <property type="entry name" value="Nucleotidyltransferase"/>
    <property type="match status" value="2"/>
</dbReference>
<dbReference type="SUPFAM" id="SSF81631">
    <property type="entry name" value="PAP/OAS1 substrate-binding domain"/>
    <property type="match status" value="2"/>
</dbReference>
<dbReference type="SUPFAM" id="SSF57756">
    <property type="entry name" value="Retrovirus zinc finger-like domains"/>
    <property type="match status" value="2"/>
</dbReference>
<dbReference type="PROSITE" id="PS50158">
    <property type="entry name" value="ZF_CCHC"/>
    <property type="match status" value="3"/>
</dbReference>
<dbReference type="PROSITE" id="PS00028">
    <property type="entry name" value="ZINC_FINGER_C2H2_1"/>
    <property type="match status" value="1"/>
</dbReference>
<sequence>MEEPKTSKNENHEPKKNIICEESKAVKIISNQTLKPRNDKSEIGTSSLNRNSSKKTKQNDICIEKTEAKSCKVNAASVPGPKDLGLVHRDQSHCKMKKLPNSPMKAQKGSSQTKLEKTPSLQTKAEKVPKSPNLPVKAEKAPCTTAEATTEKALNSQRKEENTPTSQMKLQKTPRSPLEPENVPSLLLKENVKQTESQQTGKKLTSSFVSMDKRKSEALQGEKSALENSSLSQKQQTQTDNIADSDDSASGIEDTADDLSKMKSEESNKENSSEMDYLENATVIDESALTPEQRLGLKQAEERLERDHIFRLEKRSPEYTNCRYLCKLCLIHIENIQGAHKHIKEKRHKKNILEKQEESELRSLPSPSSAHLAALSVAVVELAKEQGITDDDLRIRQDIVEEMSKVIMTFLPECSLRLYGSSLTKFALKSSDVNIDIKFPPKMNHPDLLIQVLGILKKSALYIDVESDFHAKVPVVVCKDRKSALLCRVSAGNDMACLTTDLLAALGKVEPVFTPLVLAFRYWAKLCYIDSQTDGGIPSYCFALMVMFFLQQRKPPLLPCLLGSWIEGFDPKRMDDFQLKGIVEEKFVKWEYNSSSATEKNLIADENKAKADEPKDDTKKTETDNQSNAAKAKHGKSPLTLEAPNQVPLGQLWLELLKFYTLDFALEEYVICVRIQDILTRENKNWPKRRIAIEDPFSVKRNVARSLNSQLVYEYVVERFRAAYRYFACPQKKGGNKSTMDPKKKEKGKLSSKKPVKSDCSATNCCILGESAEKIHMERGQPAKHDETEFTSQRCIVDNDSLLVNELGLANHGQDSSSLSTASGGSDLKQKSAEKQGDLTPSETSLKKELSQCICIGTPDGAESAGTDCRSNLEMDSSHQIVCNNVSATSCNCKATEVTSDLVDEDNLPSQELYYVFDKFILTSGKPPTIVCSICKKDGHSKNDCPEDFRKIDLKPLPPMTNRFREILDLVCKRCFDELSPPCSEQHNREQILIGLEKFIQKEYDEKARLCLFGSSKNGFGFRDSDLDICMTLEGHENAEKLNCKEIIENLAKILKRHPGLRNILPITTAKVPIVKFEHRRSGLEGDISLYNTLAQHNTRMLATYAAIDPRVQYLGYTMKVFAKRCDIGDASRGSLSSYAYILMVLYFLQQRKPPVIPVLQEIFDGKQIPQRMVDGWNAFFFDKTEELKKRLPSLGKNTESLGELWLGLLRFYTEEFDFKEYVISIRQKKLLTTFEKQWTSKCIAIEDPFDLNHNLGAGVSRKMTNFIMKAFINGRKLFGTPFYPLIGREAEYFFDSRVLTDGELAPNDRCCRVCGKIGHYMKDCPKRKRLKKKDSEEEKEGNEEEKDSRDLLDSRDLRCFICGDAGHVRRECPEVKMARQRNSSVAAAQLVRNLVNAQQVAGSAQQQSDQSIRTRQSSECSDSPSYSPQPQPFPQNSPQPSALPPPPSQPGSQPKLGPPQQGGQPPHQVQMPLYNFPQSPPAHYSPMHSMGLLPMHPLQIPAPSWPIHGPMLHSAPGSTPSNIGLNDPSIIFAQPAARPMAIPSPSHDGHWPRTVAPNSLVNNGAVGNSEPRFRGLNPPIPWEHAPRHFPLVPASWPYGLHQNFMHQGNPRFQPKPFYAQADRCATRRCRERCPHPPRGNVSE</sequence>
<gene>
    <name evidence="12" type="primary">Tut4</name>
    <name type="synonym">Kiaa0191</name>
    <name evidence="12" type="synonym">Zcchc11</name>
</gene>
<accession>B2RX14</accession>
<accession>A2A8R8</accession>
<accession>Q3UYT6</accession>
<accession>Q5DU43</accession>
<comment type="function">
    <text evidence="2 7 8 9 10">Uridylyltransferase that mediates the terminal uridylation of mRNAs with short (less than 25 nucleotides) poly(A) tails, hence facilitating global mRNA decay (PubMed:28792939). Essential for both oocyte maturation and fertility. Through 3' terminal uridylation of mRNA, sculpts, with TUT7, the maternal transcriptome by eliminating transcripts during oocyte growth (PubMed:28792939). Involved in microRNA (miRNA)-induced gene silencing through uridylation of deadenylated miRNA targets. Also functions as an integral regulator of microRNA biogenesiS using 3 different uridylation mechanisms (By similarity). Acts as a suppressor of miRNA biogenesis by mediating the terminal uridylation of some miRNA precursors, including that of let-7 (pre-let-7), miR107, miR-143 and miR-200c. Uridylated miRNAs are not processed by Dicer and undergo degradation. Degradation of pre-let-7 contributes to the maintenance of embryonic stem (ES) cell pluripotency (By similarity). Also catalyzes the 3' uridylation of miR-26A, a miRNA that targets IL6 transcript. This abrogates the silencing of IL6 transcript, hence promoting cytokine expression (PubMed:19703396). In the absence of LIN28A, TUT7 and TUT4 monouridylate group II pre-miRNAs, which includes most of pre-let7 members, that shapes an optimal 3' end overhang for efficient processing (PubMed:28671666). Add oligo-U tails to truncated pre-miRNAS with a 5' overhang which may promote rapid degradation of non-functional pre-miRNA species (By similarity). May also suppress Toll-like receptor-induced NF-kappa-B activation via binding to T2BP (By similarity). Does not play a role in replication-dependent histone mRNA degradation (By similarity). Due to functional redundancy between TUT4 and TUT7, the identification of the specific role of each of these proteins is difficult (PubMed:22898984, PubMed:28671666, PubMed:28792939). TUT4 and TUT7 restrict retrotransposition of long interspersed element-1 (LINE-1) in cooperation with MOV10 counteracting the RNA chaperonne activity of L1RE1. TUT7 uridylates LINE-1 mRNAs in the cytoplasm which inhibits initiation of reverse transcription once in the nucleus, whereas uridylation by TUT4 destabilizes mRNAs in cytoplasmic ribonucleoprotein granules (By similarity).</text>
</comment>
<comment type="catalytic activity">
    <reaction evidence="6">
        <text>RNA(n) + UTP = RNA(n)-3'-uridine ribonucleotide + diphosphate</text>
        <dbReference type="Rhea" id="RHEA:14785"/>
        <dbReference type="Rhea" id="RHEA-COMP:14527"/>
        <dbReference type="Rhea" id="RHEA-COMP:17348"/>
        <dbReference type="ChEBI" id="CHEBI:33019"/>
        <dbReference type="ChEBI" id="CHEBI:46398"/>
        <dbReference type="ChEBI" id="CHEBI:140395"/>
        <dbReference type="ChEBI" id="CHEBI:173116"/>
        <dbReference type="EC" id="2.7.7.52"/>
    </reaction>
</comment>
<comment type="cofactor">
    <cofactor evidence="1">
        <name>Mg(2+)</name>
        <dbReference type="ChEBI" id="CHEBI:18420"/>
    </cofactor>
    <cofactor evidence="1">
        <name>Mn(2+)</name>
        <dbReference type="ChEBI" id="CHEBI:29035"/>
    </cofactor>
</comment>
<comment type="subunit">
    <text evidence="2">Interacts with LIN28A in the presence of pre-let-7 RNA (PubMed:28671666). Interacts with T2BP. Interacts with MOV10; the interaction is RNA-dependent.</text>
</comment>
<comment type="subcellular location">
    <subcellularLocation>
        <location evidence="2">Nucleus</location>
    </subcellularLocation>
    <subcellularLocation>
        <location evidence="7">Cytoplasm</location>
    </subcellularLocation>
    <subcellularLocation>
        <location evidence="2">Cytoplasm</location>
        <location evidence="2">Cytoplasmic ribonucleoprotein granule</location>
    </subcellularLocation>
    <text evidence="2 7">Mainly cytoplasmic (PubMed:19703396). Translocates into the cytoplasm following treatment of the cell with LPS. Co-enriched in cytoplasmic foci with MOV10.</text>
</comment>
<comment type="tissue specificity">
    <text evidence="6">Ubiquitously expressed.</text>
</comment>
<comment type="domain">
    <text evidence="9">Utilizes two multidomain functional modules during the switch from monouridylation to oligouridylation. The catalytic module (containing the 3 CCHC-type Zinc finger domains) is essential for both activities while the Lin28-interacting module (LIM) at the N-terminal part is indispensable for oligouridylation.</text>
</comment>
<comment type="disruption phenotype">
    <text evidence="10">Double conditional knockouts that have deleted both TUT4 and TUT7 at the secondary oocyte stage are infertile. Females ovulate normal numbers of oocytes with normal morphology of antral follicles but with a slight decrease in the frequency of surrounded nucleolus state oocytes. Mutant oocytes are unable to support early embryonic development, they fail to complete meiosis I properly.</text>
</comment>
<comment type="similarity">
    <text evidence="11">Belongs to the DNA polymerase type-B-like family.</text>
</comment>
<comment type="sequence caution" evidence="11">
    <conflict type="erroneous gene model prediction">
        <sequence resource="EMBL-CDS" id="CAM23506"/>
    </conflict>
</comment>
<comment type="sequence caution" evidence="11">
    <conflict type="erroneous gene model prediction">
        <sequence resource="EMBL-CDS" id="CAM25329"/>
    </conflict>
</comment>